<evidence type="ECO:0000250" key="1">
    <source>
        <dbReference type="UniProtKB" id="Q63053"/>
    </source>
</evidence>
<evidence type="ECO:0000250" key="2">
    <source>
        <dbReference type="UniProtKB" id="Q7LC44"/>
    </source>
</evidence>
<evidence type="ECO:0000255" key="3"/>
<evidence type="ECO:0000256" key="4">
    <source>
        <dbReference type="SAM" id="MobiDB-lite"/>
    </source>
</evidence>
<evidence type="ECO:0000269" key="5">
    <source>
    </source>
</evidence>
<evidence type="ECO:0000269" key="6">
    <source>
    </source>
</evidence>
<evidence type="ECO:0000269" key="7">
    <source>
    </source>
</evidence>
<evidence type="ECO:0000269" key="8">
    <source>
    </source>
</evidence>
<evidence type="ECO:0000269" key="9">
    <source>
    </source>
</evidence>
<evidence type="ECO:0000269" key="10">
    <source>
    </source>
</evidence>
<evidence type="ECO:0000269" key="11">
    <source>
    </source>
</evidence>
<evidence type="ECO:0000269" key="12">
    <source>
    </source>
</evidence>
<evidence type="ECO:0000269" key="13">
    <source>
    </source>
</evidence>
<evidence type="ECO:0000269" key="14">
    <source>
    </source>
</evidence>
<evidence type="ECO:0000269" key="15">
    <source>
    </source>
</evidence>
<evidence type="ECO:0000269" key="16">
    <source>
    </source>
</evidence>
<evidence type="ECO:0000269" key="17">
    <source>
    </source>
</evidence>
<evidence type="ECO:0000269" key="18">
    <source>
    </source>
</evidence>
<evidence type="ECO:0000303" key="19">
    <source>
    </source>
</evidence>
<evidence type="ECO:0000303" key="20">
    <source ref="2"/>
</evidence>
<evidence type="ECO:0000305" key="21"/>
<evidence type="ECO:0000305" key="22">
    <source>
    </source>
</evidence>
<evidence type="ECO:0000305" key="23">
    <source>
    </source>
</evidence>
<evidence type="ECO:0000312" key="24">
    <source>
        <dbReference type="EMBL" id="AAD43586.1"/>
    </source>
</evidence>
<evidence type="ECO:0000312" key="25">
    <source>
        <dbReference type="EMBL" id="AAG10254.1"/>
    </source>
</evidence>
<evidence type="ECO:0000312" key="26">
    <source>
        <dbReference type="EMBL" id="AAH23127.1"/>
    </source>
</evidence>
<evidence type="ECO:0000312" key="27">
    <source>
        <dbReference type="EMBL" id="AAK91587.1"/>
    </source>
</evidence>
<evidence type="ECO:0000312" key="28">
    <source>
        <dbReference type="MGI" id="MGI:88067"/>
    </source>
</evidence>
<sequence>MELDHMTTGGLHAYPAPRGGPAAKPNVILQIGKCRAEMLEHVRRTHRHLLTEVSKQVERELKGLHRSVGKLENNLDGYVPTGDSQRWKKSIKACLCRCQETIANLERWVKREMHVWREVFYRLERWADRLESMGGKYPVGSEPARHTVSVGVGGPEPYCQEADGYDYTVSPYAITPPPAAGELPEQESVEAQQYQSWGPGEDGQPSPGVDTQIFEDPREFLSHLEEYLRQVGGSEEYWLSQIQNHMNGPAKKWWEFKQGSVKNWVEFKKEFLQYSEGTLSREAIQRELELPQKQGEPLDQFLWRKRDLYQTLYVDAEEEEIIQYVVGTLQPKLKRFLRHPLPKTLEQLIQRGMEVQDGLEQAAEPSGTPLPTEDETEALTPALTSESVASDRTQPE</sequence>
<dbReference type="EMBL" id="AF177701">
    <property type="protein sequence ID" value="AAK91587.1"/>
    <property type="molecule type" value="Genomic_DNA"/>
</dbReference>
<dbReference type="EMBL" id="AF162777">
    <property type="protein sequence ID" value="AAD43586.1"/>
    <property type="molecule type" value="mRNA"/>
</dbReference>
<dbReference type="EMBL" id="AK157822">
    <property type="protein sequence ID" value="BAE34212.1"/>
    <property type="molecule type" value="mRNA"/>
</dbReference>
<dbReference type="EMBL" id="AK170446">
    <property type="protein sequence ID" value="BAE41804.1"/>
    <property type="molecule type" value="mRNA"/>
</dbReference>
<dbReference type="EMBL" id="BC023127">
    <property type="protein sequence ID" value="AAH23127.1"/>
    <property type="molecule type" value="mRNA"/>
</dbReference>
<dbReference type="EMBL" id="AF254662">
    <property type="protein sequence ID" value="AAG10254.1"/>
    <property type="molecule type" value="Genomic_DNA"/>
</dbReference>
<dbReference type="CCDS" id="CCDS37102.1"/>
<dbReference type="RefSeq" id="NP_001263613.1">
    <property type="nucleotide sequence ID" value="NM_001276684.1"/>
</dbReference>
<dbReference type="RefSeq" id="NP_061260.1">
    <property type="nucleotide sequence ID" value="NM_018790.3"/>
</dbReference>
<dbReference type="SMR" id="Q9WV31"/>
<dbReference type="BioGRID" id="198182">
    <property type="interactions" value="11"/>
</dbReference>
<dbReference type="CORUM" id="Q9WV31"/>
<dbReference type="DIP" id="DIP-31565N"/>
<dbReference type="FunCoup" id="Q9WV31">
    <property type="interactions" value="105"/>
</dbReference>
<dbReference type="IntAct" id="Q9WV31">
    <property type="interactions" value="10"/>
</dbReference>
<dbReference type="MINT" id="Q9WV31"/>
<dbReference type="STRING" id="10090.ENSMUSP00000023268"/>
<dbReference type="GlyGen" id="Q9WV31">
    <property type="glycosylation" value="2 sites, 1 O-linked glycan (1 site)"/>
</dbReference>
<dbReference type="iPTMnet" id="Q9WV31"/>
<dbReference type="PhosphoSitePlus" id="Q9WV31"/>
<dbReference type="SwissPalm" id="Q9WV31"/>
<dbReference type="PaxDb" id="10090-ENSMUSP00000023268"/>
<dbReference type="PeptideAtlas" id="Q9WV31"/>
<dbReference type="ProteomicsDB" id="273918"/>
<dbReference type="Antibodypedia" id="3992">
    <property type="antibodies" value="303 antibodies from 34 providers"/>
</dbReference>
<dbReference type="DNASU" id="11838"/>
<dbReference type="Ensembl" id="ENSMUST00000023268.14">
    <property type="protein sequence ID" value="ENSMUSP00000023268.7"/>
    <property type="gene ID" value="ENSMUSG00000022602.15"/>
</dbReference>
<dbReference type="Ensembl" id="ENSMUST00000110009.4">
    <property type="protein sequence ID" value="ENSMUSP00000105636.4"/>
    <property type="gene ID" value="ENSMUSG00000022602.15"/>
</dbReference>
<dbReference type="GeneID" id="11838"/>
<dbReference type="KEGG" id="mmu:11838"/>
<dbReference type="UCSC" id="uc007wfn.2">
    <property type="organism name" value="mouse"/>
</dbReference>
<dbReference type="AGR" id="MGI:88067"/>
<dbReference type="CTD" id="23237"/>
<dbReference type="MGI" id="MGI:88067">
    <property type="gene designation" value="Arc"/>
</dbReference>
<dbReference type="VEuPathDB" id="HostDB:ENSMUSG00000022602"/>
<dbReference type="eggNOG" id="ENOG502QSPT">
    <property type="taxonomic scope" value="Eukaryota"/>
</dbReference>
<dbReference type="GeneTree" id="ENSGT00390000003914"/>
<dbReference type="HOGENOM" id="CLU_782004_0_0_1"/>
<dbReference type="InParanoid" id="Q9WV31"/>
<dbReference type="OMA" id="NWLEFKK"/>
<dbReference type="OrthoDB" id="9867597at2759"/>
<dbReference type="PhylomeDB" id="Q9WV31"/>
<dbReference type="TreeFam" id="TF335604"/>
<dbReference type="BioGRID-ORCS" id="11838">
    <property type="hits" value="3 hits in 77 CRISPR screens"/>
</dbReference>
<dbReference type="CD-CODE" id="CE726F99">
    <property type="entry name" value="Postsynaptic density"/>
</dbReference>
<dbReference type="ChiTaRS" id="Arc">
    <property type="organism name" value="mouse"/>
</dbReference>
<dbReference type="PRO" id="PR:Q9WV31"/>
<dbReference type="Proteomes" id="UP000000589">
    <property type="component" value="Chromosome 15"/>
</dbReference>
<dbReference type="RNAct" id="Q9WV31">
    <property type="molecule type" value="protein"/>
</dbReference>
<dbReference type="Bgee" id="ENSMUSG00000022602">
    <property type="expression patterns" value="Expressed in primary visual cortex and 72 other cell types or tissues"/>
</dbReference>
<dbReference type="GO" id="GO:0001669">
    <property type="term" value="C:acrosomal vesicle"/>
    <property type="evidence" value="ECO:0007669"/>
    <property type="project" value="UniProtKB-SubCell"/>
</dbReference>
<dbReference type="GO" id="GO:0005938">
    <property type="term" value="C:cell cortex"/>
    <property type="evidence" value="ECO:0007669"/>
    <property type="project" value="UniProtKB-SubCell"/>
</dbReference>
<dbReference type="GO" id="GO:0030665">
    <property type="term" value="C:clathrin-coated vesicle membrane"/>
    <property type="evidence" value="ECO:0007669"/>
    <property type="project" value="UniProtKB-SubCell"/>
</dbReference>
<dbReference type="GO" id="GO:0005856">
    <property type="term" value="C:cytoskeleton"/>
    <property type="evidence" value="ECO:0000304"/>
    <property type="project" value="MGI"/>
</dbReference>
<dbReference type="GO" id="GO:0030425">
    <property type="term" value="C:dendrite"/>
    <property type="evidence" value="ECO:0000314"/>
    <property type="project" value="MGI"/>
</dbReference>
<dbReference type="GO" id="GO:0043197">
    <property type="term" value="C:dendritic spine"/>
    <property type="evidence" value="ECO:0000314"/>
    <property type="project" value="UniProtKB"/>
</dbReference>
<dbReference type="GO" id="GO:0031901">
    <property type="term" value="C:early endosome membrane"/>
    <property type="evidence" value="ECO:0007669"/>
    <property type="project" value="UniProtKB-SubCell"/>
</dbReference>
<dbReference type="GO" id="GO:1903561">
    <property type="term" value="C:extracellular vesicle"/>
    <property type="evidence" value="ECO:0000250"/>
    <property type="project" value="UniProtKB"/>
</dbReference>
<dbReference type="GO" id="GO:0098978">
    <property type="term" value="C:glutamatergic synapse"/>
    <property type="evidence" value="ECO:0000314"/>
    <property type="project" value="SynGO"/>
</dbReference>
<dbReference type="GO" id="GO:0045121">
    <property type="term" value="C:membrane raft"/>
    <property type="evidence" value="ECO:0000314"/>
    <property type="project" value="UniProtKB"/>
</dbReference>
<dbReference type="GO" id="GO:0071598">
    <property type="term" value="C:neuronal ribonucleoprotein granule"/>
    <property type="evidence" value="ECO:0000314"/>
    <property type="project" value="MGI"/>
</dbReference>
<dbReference type="GO" id="GO:0014069">
    <property type="term" value="C:postsynaptic density"/>
    <property type="evidence" value="ECO:0007669"/>
    <property type="project" value="UniProtKB-SubCell"/>
</dbReference>
<dbReference type="GO" id="GO:0045211">
    <property type="term" value="C:postsynaptic membrane"/>
    <property type="evidence" value="ECO:0007669"/>
    <property type="project" value="UniProtKB-SubCell"/>
</dbReference>
<dbReference type="GO" id="GO:0170047">
    <property type="term" value="C:virus-like capsid"/>
    <property type="evidence" value="ECO:0007669"/>
    <property type="project" value="Ensembl"/>
</dbReference>
<dbReference type="GO" id="GO:0003779">
    <property type="term" value="F:actin binding"/>
    <property type="evidence" value="ECO:0000304"/>
    <property type="project" value="MGI"/>
</dbReference>
<dbReference type="GO" id="GO:0003729">
    <property type="term" value="F:mRNA binding"/>
    <property type="evidence" value="ECO:0000250"/>
    <property type="project" value="UniProtKB"/>
</dbReference>
<dbReference type="GO" id="GO:0005198">
    <property type="term" value="F:structural molecule activity"/>
    <property type="evidence" value="ECO:0007669"/>
    <property type="project" value="Ensembl"/>
</dbReference>
<dbReference type="GO" id="GO:0009952">
    <property type="term" value="P:anterior/posterior pattern specification"/>
    <property type="evidence" value="ECO:0000315"/>
    <property type="project" value="MGI"/>
</dbReference>
<dbReference type="GO" id="GO:0016477">
    <property type="term" value="P:cell migration"/>
    <property type="evidence" value="ECO:0000250"/>
    <property type="project" value="UniProtKB"/>
</dbReference>
<dbReference type="GO" id="GO:0007010">
    <property type="term" value="P:cytoskeleton organization"/>
    <property type="evidence" value="ECO:0000250"/>
    <property type="project" value="UniProtKB"/>
</dbReference>
<dbReference type="GO" id="GO:0006897">
    <property type="term" value="P:endocytosis"/>
    <property type="evidence" value="ECO:0007669"/>
    <property type="project" value="UniProtKB-KW"/>
</dbReference>
<dbReference type="GO" id="GO:0007492">
    <property type="term" value="P:endoderm development"/>
    <property type="evidence" value="ECO:0000315"/>
    <property type="project" value="MGI"/>
</dbReference>
<dbReference type="GO" id="GO:0007616">
    <property type="term" value="P:long-term memory"/>
    <property type="evidence" value="ECO:0000315"/>
    <property type="project" value="UniProtKB"/>
</dbReference>
<dbReference type="GO" id="GO:0050804">
    <property type="term" value="P:modulation of chemical synaptic transmission"/>
    <property type="evidence" value="ECO:0000315"/>
    <property type="project" value="UniProtKB"/>
</dbReference>
<dbReference type="GO" id="GO:0051028">
    <property type="term" value="P:mRNA transport"/>
    <property type="evidence" value="ECO:0000250"/>
    <property type="project" value="UniProtKB"/>
</dbReference>
<dbReference type="GO" id="GO:0051260">
    <property type="term" value="P:protein homooligomerization"/>
    <property type="evidence" value="ECO:0000250"/>
    <property type="project" value="UniProtKB"/>
</dbReference>
<dbReference type="GO" id="GO:0022604">
    <property type="term" value="P:regulation of cell morphogenesis"/>
    <property type="evidence" value="ECO:0000250"/>
    <property type="project" value="UniProtKB"/>
</dbReference>
<dbReference type="GO" id="GO:1900452">
    <property type="term" value="P:regulation of long-term synaptic depression"/>
    <property type="evidence" value="ECO:0000314"/>
    <property type="project" value="UniProtKB"/>
</dbReference>
<dbReference type="GO" id="GO:1900271">
    <property type="term" value="P:regulation of long-term synaptic potentiation"/>
    <property type="evidence" value="ECO:0000315"/>
    <property type="project" value="UniProtKB"/>
</dbReference>
<dbReference type="GO" id="GO:0099149">
    <property type="term" value="P:regulation of postsynaptic neurotransmitter receptor internalization"/>
    <property type="evidence" value="ECO:0000314"/>
    <property type="project" value="SynGO"/>
</dbReference>
<dbReference type="GO" id="GO:0110077">
    <property type="term" value="P:vesicle-mediated intercellular transport"/>
    <property type="evidence" value="ECO:0000250"/>
    <property type="project" value="UniProtKB"/>
</dbReference>
<dbReference type="InterPro" id="IPR023263">
    <property type="entry name" value="Arc"/>
</dbReference>
<dbReference type="InterPro" id="IPR040814">
    <property type="entry name" value="Arc_C"/>
</dbReference>
<dbReference type="InterPro" id="IPR048965">
    <property type="entry name" value="Arc_capsid_dom"/>
</dbReference>
<dbReference type="InterPro" id="IPR045557">
    <property type="entry name" value="Arc_N"/>
</dbReference>
<dbReference type="PANTHER" id="PTHR15962">
    <property type="entry name" value="ACTIVITY-REGULATED CYTOSKELETON-ASSOCIATED PROTEIN"/>
    <property type="match status" value="1"/>
</dbReference>
<dbReference type="PANTHER" id="PTHR15962:SF0">
    <property type="entry name" value="ACTIVITY-REGULATED CYTOSKELETON-ASSOCIATED PROTEIN"/>
    <property type="match status" value="1"/>
</dbReference>
<dbReference type="Pfam" id="PF18162">
    <property type="entry name" value="Arc_C"/>
    <property type="match status" value="1"/>
</dbReference>
<dbReference type="Pfam" id="PF21395">
    <property type="entry name" value="Arc_capsid_dom"/>
    <property type="match status" value="1"/>
</dbReference>
<dbReference type="Pfam" id="PF19284">
    <property type="entry name" value="Arc_MA"/>
    <property type="match status" value="1"/>
</dbReference>
<dbReference type="PRINTS" id="PR02027">
    <property type="entry name" value="ARCARG31"/>
</dbReference>
<accession>Q9WV31</accession>
<accession>Q9ES15</accession>
<protein>
    <recommendedName>
        <fullName evidence="21">Activity-regulated cytoskeleton-associated protein</fullName>
        <shortName evidence="20">mArc</shortName>
    </recommendedName>
    <alternativeName>
        <fullName evidence="19">Activity-regulated gene 3.1 protein</fullName>
        <shortName evidence="19">ARC/ARG3.1</shortName>
        <shortName evidence="19">Arg3.1</shortName>
    </alternativeName>
</protein>
<feature type="chain" id="PRO_0000273286" description="Activity-regulated cytoskeleton-associated protein">
    <location>
        <begin position="1"/>
        <end position="396"/>
    </location>
</feature>
<feature type="region of interest" description="Interaction with SH3GL1 or SH3GL3" evidence="1">
    <location>
        <begin position="89"/>
        <end position="100"/>
    </location>
</feature>
<feature type="region of interest" description="Disordered" evidence="4">
    <location>
        <begin position="177"/>
        <end position="207"/>
    </location>
</feature>
<feature type="region of interest" description="Interaction with DNM2" evidence="1">
    <location>
        <begin position="195"/>
        <end position="214"/>
    </location>
</feature>
<feature type="region of interest" description="Disordered" evidence="4">
    <location>
        <begin position="356"/>
        <end position="396"/>
    </location>
</feature>
<feature type="coiled-coil region" evidence="3">
    <location>
        <begin position="54"/>
        <end position="78"/>
    </location>
</feature>
<feature type="compositionally biased region" description="Polar residues" evidence="4">
    <location>
        <begin position="382"/>
        <end position="396"/>
    </location>
</feature>
<feature type="modified residue" description="Phosphoserine; by CaMK2" evidence="18">
    <location>
        <position position="260"/>
    </location>
</feature>
<feature type="modified residue" description="Phosphothreonine" evidence="18">
    <location>
        <position position="278"/>
    </location>
</feature>
<feature type="cross-link" description="Glycyl lysine isopeptide (Lys-Gly) (interchain with G-Cter in ubiquitin)" evidence="2">
    <location>
        <position position="268"/>
    </location>
</feature>
<feature type="cross-link" description="Glycyl lysine isopeptide (Lys-Gly) (interchain with G-Cter in ubiquitin)" evidence="2">
    <location>
        <position position="269"/>
    </location>
</feature>
<feature type="mutagenesis site" description="Abolished palmitoylation, leading to impaired ability mediate synaptic long-term depression (LTD)." evidence="17">
    <original>CLCRC</original>
    <variation>SLSRS</variation>
    <location>
        <begin position="94"/>
        <end position="98"/>
    </location>
</feature>
<feature type="mutagenesis site" description="Impaired ability to homooligomerize at 30 degrees Celsius." evidence="18">
    <original>Q</original>
    <variation>A</variation>
    <location>
        <position position="241"/>
    </location>
</feature>
<feature type="mutagenesis site" description="Impaired ability to homooligomerize at 30 degrees Celsius." evidence="18">
    <original>K</original>
    <variation>A</variation>
    <location>
        <position position="257"/>
    </location>
</feature>
<feature type="mutagenesis site" description="Abolished phosphorylation by CaMK2; knockin mice display normal baseline synaptic transmission and long-term potentiation (LTP) in the hippocampus, but metabotropic receptor-LTD is increased; when associated with A-278." evidence="18">
    <original>S</original>
    <variation>A</variation>
    <location>
        <position position="260"/>
    </location>
</feature>
<feature type="mutagenesis site" description="Phosphomimetic mutant; impaired ability to homooligomerize at 30 degrees Celsius." evidence="18">
    <original>S</original>
    <variation>D</variation>
    <location>
        <position position="260"/>
    </location>
</feature>
<feature type="mutagenesis site" description="Impaired ability to homooligomerize at 30 degrees Celsius." evidence="18">
    <original>G</original>
    <variation>D</variation>
    <location>
        <position position="277"/>
    </location>
</feature>
<feature type="mutagenesis site" description="Abolished phosphorylation by CaMK2; knockin mice display normal baseline synaptic transmission and long-term potentiation (LTP) in the hippocampus, but metabotropic receptor-LTD is increased; when associated with A-278." evidence="18">
    <original>T</original>
    <variation>A</variation>
    <location>
        <position position="278"/>
    </location>
</feature>
<feature type="mutagenesis site" description="Phosphomimetic mutant; does not affect ability to homooligomerize." evidence="18">
    <original>T</original>
    <variation>D</variation>
    <location>
        <position position="278"/>
    </location>
</feature>
<feature type="mutagenesis site" description="Impaired ability to homooligomerize at 30 degrees Celsius." evidence="18">
    <original>R</original>
    <variation>E</variation>
    <location>
        <position position="335"/>
    </location>
</feature>
<comment type="function">
    <text evidence="1 7 8 10 11 12 13 16 17 18">Master regulator of synaptic plasticity that self-assembles into virion-like capsids that encapsulate RNAs and mediate intercellular RNA transfer in the nervous system (By similarity). ARC protein is released from neurons in extracellular vesicles that mediate the transfer of ARC mRNA into new target cells, where ARC mRNA can undergo activity-dependent translation (By similarity). ARC capsids are endocytosed and are able to transfer ARC mRNA into the cytoplasm of neurons (By similarity). Acts as a key regulator of synaptic plasticity: required for protein synthesis-dependent forms of long-term potentiation (LTP) and depression (LTD) and for the formation of long-term memory (PubMed:24094104, PubMed:29264923, PubMed:31151856). Regulates synaptic plasticity by promoting endocytosis of AMPA receptors (AMPARs) in response to synaptic activity: this endocytic pathway maintains levels of surface AMPARs in response to chronic changes in neuronal activity through synaptic scaling, thereby contributing to neuronal homeostasis (PubMed:17088213, PubMed:20211139, PubMed:20228806). Acts as a postsynaptic mediator of activity-dependent synapse elimination in the developing cerebellum by mediating elimination of surplus climbing fiber synapses (PubMed:23791196). Accumulates at weaker synapses, probably to prevent their undesired enhancement (By similarity). This suggests that ARC-containing virion-like capsids may be required to eliminate synaptic material (By similarity). Required to transduce experience into long-lasting changes in visual cortex plasticity and for long-term memory (PubMed:17088210, PubMed:20228806). Involved in postsynaptic trafficking and processing of amyloid-beta A4 (APP) via interaction with PSEN1 (PubMed:22036569). In addition to its role in synapses, also involved in the regulation of the immune system: specifically expressed in skin-migratory dendritic cells and regulates fast dendritic cell migration, thereby regulating T-cell activation (PubMed:28783680).</text>
</comment>
<comment type="subunit">
    <text evidence="1 12 18">Homooligomer; homooligomerizes into virion-like capsids (PubMed:31151856). Interacts with SH3GL1/endophilin-2, SH3GL3/endophilin-3 and DNM2/DYN2 (By similarity). Interacts with CAMK2B (in the kinase inactive state); leading to target ARC to inactive synapses (By similarity). Interacts with PSEN1 (PubMed:22036569). Interacts with GRIN2A and GRIN2B; inhibiting homooligomerization (By similarity).</text>
</comment>
<comment type="interaction">
    <interactant intactId="EBI-397779">
        <id>Q9WV31</id>
    </interactant>
    <interactant intactId="EBI-397029">
        <id>P28652</id>
        <label>Camk2b</label>
    </interactant>
    <organismsDiffer>false</organismsDiffer>
    <experiments>2</experiments>
</comment>
<comment type="interaction">
    <interactant intactId="EBI-397779">
        <id>Q9WV31</id>
    </interactant>
    <interactant intactId="EBI-300895">
        <id>Q62108</id>
        <label>Dlg4</label>
    </interactant>
    <organismsDiffer>false</organismsDiffer>
    <experiments>7</experiments>
</comment>
<comment type="interaction">
    <interactant intactId="EBI-397779">
        <id>Q9WV31</id>
    </interactant>
    <interactant intactId="EBI-5260983">
        <id>PRO_0000025597</id>
        <label>Psen1</label>
        <dbReference type="UniProtKB" id="P49769"/>
    </interactant>
    <organismsDiffer>false</organismsDiffer>
    <experiments>2</experiments>
</comment>
<comment type="subcellular location">
    <subcellularLocation>
        <location evidence="1">Extracellular vesicle membrane</location>
        <topology evidence="17">Lipid-anchor</topology>
    </subcellularLocation>
    <subcellularLocation>
        <location evidence="12">Postsynaptic cell membrane</location>
        <topology evidence="17">Lipid-anchor</topology>
    </subcellularLocation>
    <subcellularLocation>
        <location evidence="1">Synapse</location>
    </subcellularLocation>
    <subcellularLocation>
        <location evidence="1">Postsynaptic density</location>
    </subcellularLocation>
    <subcellularLocation>
        <location evidence="23">Early endosome membrane</location>
    </subcellularLocation>
    <subcellularLocation>
        <location evidence="18">Cell projection</location>
        <location evidence="18">Dendrite</location>
    </subcellularLocation>
    <subcellularLocation>
        <location evidence="1">Cytoplasm</location>
        <location evidence="1">Cytoskeleton</location>
    </subcellularLocation>
    <subcellularLocation>
        <location evidence="1">Cytoplasm</location>
        <location evidence="1">Cell cortex</location>
    </subcellularLocation>
    <subcellularLocation>
        <location evidence="1">Cell projection</location>
        <location evidence="1">Dendritic spine</location>
    </subcellularLocation>
    <subcellularLocation>
        <location evidence="6">Cytoplasmic vesicle</location>
        <location evidence="6">Secretory vesicle</location>
        <location evidence="6">Acrosome</location>
    </subcellularLocation>
    <subcellularLocation>
        <location evidence="2">Cytoplasmic vesicle</location>
        <location evidence="2">Clathrin-coated vesicle membrane</location>
    </subcellularLocation>
    <text evidence="1 6">Forms virion-like extracellular vesicles that are released from neurons (By similarity). Enriched in postsynaptic density of dendritic spines (By similarity). Targeted to inactive synapses following interaction with CAMK2B in the kinase inactive state (By similarity). Accumulation at weaker synapses may be required to prevent their undesired enhancement (By similarity). Associated with the cell cortex of neuronal soma and dendrites (By similarity). Associated with the sperm tail (PubMed:12493697).</text>
</comment>
<comment type="tissue specificity">
    <text evidence="6 11 16">Expressed in brain and testis (PubMed:12493697). In primary visual cortex, detected in all cortical layers with the exception of layer 5: present at highest level in layers 2/3 and 4, the predominant sites of ocular dominance plasticity (at protein level) (PubMed:20228806). Also expressed in skin-migratory dendritic cells (PubMed:28783680).</text>
</comment>
<comment type="developmental stage">
    <text evidence="5 6">Ubiquitously expressed in early mouse embryos (PubMed:10727859). Detectable in brain from postnatal week 1, in testis from postnatal week 3.</text>
</comment>
<comment type="induction">
    <text evidence="9 13">Arc expression is regulated at transcription, post-transcription and translation levels (PubMed:19116276, PubMed:24094104). Expression is induced by neuronal and synaptic activity (PubMed:19116276, PubMed:24094104).</text>
</comment>
<comment type="PTM">
    <text evidence="2 10">Ubiquitinated by UBE3A, leading to its degradation by the proteasome, thereby promoting AMPA receptors (AMPARs) expression at synapses (PubMed:20211139). Ubiquitinated by RNF216 at Lys-268 and Lys-269 limiting ARC protein levels induced by synaptic activity and thus regulating ARC-dependent forms of synaptic plasticity (By similarity).</text>
</comment>
<comment type="PTM">
    <text evidence="22">Palmitoylation anchors the protein into the membrane by allowing direct insertion into the hydrophobic core of the lipid bilayer.</text>
</comment>
<comment type="PTM">
    <text evidence="18">Phosphorylation at Ser-260 by CaMK2 prevents homooligomerization into virion-like capsids by disrupting an interaction surface essential for high-order oligomerization (PubMed:31151856). Phosphorylation by CaMK2 inhibits synaptic activity (PubMed:31151856).</text>
</comment>
<comment type="disruption phenotype">
    <text evidence="7 11 14 15">Mice show deficits in several forms of long-term memory formation including spatial and fear-related learning, conditioned taste aversion as well as long-term object recognition (PubMed:17088210). They show enhanced early-phase but impaired late-phase long-term potentiation (LTP) as well as impaired long-term depression (LTD). Neurons lacking Arc show an increase in surface levels of AMPA receptors (PubMed:17088210). In the visual cortex, mice are impervious to the effects of deprivation or experience: mice do not exhibit depression of deprived-eye responses or a shift in ocular dominance after brief monocular deprivation (PubMed:20228806). Although mice exhibit normal visual acuity, baseline ocular dominance is abnormal and resemble that observed after dark-rearing (PubMed:20228806). Mice also show schizophrenia-related phenotypes characterized by deficits in sensorimotor gating, cognitive functions, social behaviors and amphetamine-induced psychomotor responses (PubMed:27524619). Divergent alterations between the prefrontal cortex and striatal dopaminergic system that capture aspects of schizophrenia-related neuropathophysiology are observed (PubMed:27524619). Knockout mice show a relative loss of high-frequency electroencephalogram activity in hippocampus, as well as a decrease in phase locking of spikes to electroencephalogram oscillations (PubMed:27038743).</text>
</comment>
<comment type="miscellaneous">
    <text evidence="7">Widely used as activity-dependent neuronal marker to identify recently activated neurons in behavioral studies.</text>
</comment>
<comment type="similarity">
    <text evidence="21">Belongs to the ARC/ARG3.1 family.</text>
</comment>
<comment type="caution">
    <text evidence="5 7">Genetic disruption of the protein-coding gene was initially reported to cause early embryonic lethality (PubMed:10727859). However, only a partial deletion of the coding region was performed, leading to dominant-negative effects (PubMed:10727859). A complete deletion of the coding region later showed that mice are viable and display deficits in several forms of long-term memory formation (PubMed:17088210).</text>
</comment>
<keyword id="KW-1003">Cell membrane</keyword>
<keyword id="KW-0966">Cell projection</keyword>
<keyword id="KW-0175">Coiled coil</keyword>
<keyword id="KW-0963">Cytoplasm</keyword>
<keyword id="KW-0968">Cytoplasmic vesicle</keyword>
<keyword id="KW-0206">Cytoskeleton</keyword>
<keyword id="KW-0217">Developmental protein</keyword>
<keyword id="KW-0254">Endocytosis</keyword>
<keyword id="KW-0967">Endosome</keyword>
<keyword id="KW-1017">Isopeptide bond</keyword>
<keyword id="KW-0449">Lipoprotein</keyword>
<keyword id="KW-0472">Membrane</keyword>
<keyword id="KW-0564">Palmitate</keyword>
<keyword id="KW-0597">Phosphoprotein</keyword>
<keyword id="KW-0628">Postsynaptic cell membrane</keyword>
<keyword id="KW-1185">Reference proteome</keyword>
<keyword id="KW-0694">RNA-binding</keyword>
<keyword id="KW-0770">Synapse</keyword>
<keyword id="KW-0813">Transport</keyword>
<keyword id="KW-0832">Ubl conjugation</keyword>
<reference key="1">
    <citation type="journal article" date="2001" name="J. Neurosci.">
        <title>Arg3.1/Arc mRNA induction by Ca2+ and cAMP requires protein kinase A and mitogen-activated protein kinase/extracellular regulated kinase activation.</title>
        <authorList>
            <person name="Waltereit R."/>
            <person name="Dammermann B."/>
            <person name="Wulff P."/>
            <person name="Scafidi J."/>
            <person name="Staubli U."/>
            <person name="Kauselmann G."/>
            <person name="Bundman M."/>
            <person name="Kuhl D."/>
        </authorList>
    </citation>
    <scope>NUCLEOTIDE SEQUENCE [GENOMIC DNA]</scope>
    <source>
        <strain evidence="27">129/Sv</strain>
    </source>
</reference>
<reference key="2">
    <citation type="submission" date="1999-06" db="EMBL/GenBank/DDBJ databases">
        <title>The mArc gene, a mouse homolog of rat Arc.</title>
        <authorList>
            <person name="Chowdhury S."/>
            <person name="Lanahan A.A."/>
            <person name="Worley P.F."/>
        </authorList>
    </citation>
    <scope>NUCLEOTIDE SEQUENCE [MRNA]</scope>
    <source>
        <strain evidence="24">C57BL/6J</strain>
        <tissue evidence="24">Forebrain</tissue>
    </source>
</reference>
<reference key="3">
    <citation type="journal article" date="2005" name="Science">
        <title>The transcriptional landscape of the mammalian genome.</title>
        <authorList>
            <person name="Carninci P."/>
            <person name="Kasukawa T."/>
            <person name="Katayama S."/>
            <person name="Gough J."/>
            <person name="Frith M.C."/>
            <person name="Maeda N."/>
            <person name="Oyama R."/>
            <person name="Ravasi T."/>
            <person name="Lenhard B."/>
            <person name="Wells C."/>
            <person name="Kodzius R."/>
            <person name="Shimokawa K."/>
            <person name="Bajic V.B."/>
            <person name="Brenner S.E."/>
            <person name="Batalov S."/>
            <person name="Forrest A.R."/>
            <person name="Zavolan M."/>
            <person name="Davis M.J."/>
            <person name="Wilming L.G."/>
            <person name="Aidinis V."/>
            <person name="Allen J.E."/>
            <person name="Ambesi-Impiombato A."/>
            <person name="Apweiler R."/>
            <person name="Aturaliya R.N."/>
            <person name="Bailey T.L."/>
            <person name="Bansal M."/>
            <person name="Baxter L."/>
            <person name="Beisel K.W."/>
            <person name="Bersano T."/>
            <person name="Bono H."/>
            <person name="Chalk A.M."/>
            <person name="Chiu K.P."/>
            <person name="Choudhary V."/>
            <person name="Christoffels A."/>
            <person name="Clutterbuck D.R."/>
            <person name="Crowe M.L."/>
            <person name="Dalla E."/>
            <person name="Dalrymple B.P."/>
            <person name="de Bono B."/>
            <person name="Della Gatta G."/>
            <person name="di Bernardo D."/>
            <person name="Down T."/>
            <person name="Engstrom P."/>
            <person name="Fagiolini M."/>
            <person name="Faulkner G."/>
            <person name="Fletcher C.F."/>
            <person name="Fukushima T."/>
            <person name="Furuno M."/>
            <person name="Futaki S."/>
            <person name="Gariboldi M."/>
            <person name="Georgii-Hemming P."/>
            <person name="Gingeras T.R."/>
            <person name="Gojobori T."/>
            <person name="Green R.E."/>
            <person name="Gustincich S."/>
            <person name="Harbers M."/>
            <person name="Hayashi Y."/>
            <person name="Hensch T.K."/>
            <person name="Hirokawa N."/>
            <person name="Hill D."/>
            <person name="Huminiecki L."/>
            <person name="Iacono M."/>
            <person name="Ikeo K."/>
            <person name="Iwama A."/>
            <person name="Ishikawa T."/>
            <person name="Jakt M."/>
            <person name="Kanapin A."/>
            <person name="Katoh M."/>
            <person name="Kawasawa Y."/>
            <person name="Kelso J."/>
            <person name="Kitamura H."/>
            <person name="Kitano H."/>
            <person name="Kollias G."/>
            <person name="Krishnan S.P."/>
            <person name="Kruger A."/>
            <person name="Kummerfeld S.K."/>
            <person name="Kurochkin I.V."/>
            <person name="Lareau L.F."/>
            <person name="Lazarevic D."/>
            <person name="Lipovich L."/>
            <person name="Liu J."/>
            <person name="Liuni S."/>
            <person name="McWilliam S."/>
            <person name="Madan Babu M."/>
            <person name="Madera M."/>
            <person name="Marchionni L."/>
            <person name="Matsuda H."/>
            <person name="Matsuzawa S."/>
            <person name="Miki H."/>
            <person name="Mignone F."/>
            <person name="Miyake S."/>
            <person name="Morris K."/>
            <person name="Mottagui-Tabar S."/>
            <person name="Mulder N."/>
            <person name="Nakano N."/>
            <person name="Nakauchi H."/>
            <person name="Ng P."/>
            <person name="Nilsson R."/>
            <person name="Nishiguchi S."/>
            <person name="Nishikawa S."/>
            <person name="Nori F."/>
            <person name="Ohara O."/>
            <person name="Okazaki Y."/>
            <person name="Orlando V."/>
            <person name="Pang K.C."/>
            <person name="Pavan W.J."/>
            <person name="Pavesi G."/>
            <person name="Pesole G."/>
            <person name="Petrovsky N."/>
            <person name="Piazza S."/>
            <person name="Reed J."/>
            <person name="Reid J.F."/>
            <person name="Ring B.Z."/>
            <person name="Ringwald M."/>
            <person name="Rost B."/>
            <person name="Ruan Y."/>
            <person name="Salzberg S.L."/>
            <person name="Sandelin A."/>
            <person name="Schneider C."/>
            <person name="Schoenbach C."/>
            <person name="Sekiguchi K."/>
            <person name="Semple C.A."/>
            <person name="Seno S."/>
            <person name="Sessa L."/>
            <person name="Sheng Y."/>
            <person name="Shibata Y."/>
            <person name="Shimada H."/>
            <person name="Shimada K."/>
            <person name="Silva D."/>
            <person name="Sinclair B."/>
            <person name="Sperling S."/>
            <person name="Stupka E."/>
            <person name="Sugiura K."/>
            <person name="Sultana R."/>
            <person name="Takenaka Y."/>
            <person name="Taki K."/>
            <person name="Tammoja K."/>
            <person name="Tan S.L."/>
            <person name="Tang S."/>
            <person name="Taylor M.S."/>
            <person name="Tegner J."/>
            <person name="Teichmann S.A."/>
            <person name="Ueda H.R."/>
            <person name="van Nimwegen E."/>
            <person name="Verardo R."/>
            <person name="Wei C.L."/>
            <person name="Yagi K."/>
            <person name="Yamanishi H."/>
            <person name="Zabarovsky E."/>
            <person name="Zhu S."/>
            <person name="Zimmer A."/>
            <person name="Hide W."/>
            <person name="Bult C."/>
            <person name="Grimmond S.M."/>
            <person name="Teasdale R.D."/>
            <person name="Liu E.T."/>
            <person name="Brusic V."/>
            <person name="Quackenbush J."/>
            <person name="Wahlestedt C."/>
            <person name="Mattick J.S."/>
            <person name="Hume D.A."/>
            <person name="Kai C."/>
            <person name="Sasaki D."/>
            <person name="Tomaru Y."/>
            <person name="Fukuda S."/>
            <person name="Kanamori-Katayama M."/>
            <person name="Suzuki M."/>
            <person name="Aoki J."/>
            <person name="Arakawa T."/>
            <person name="Iida J."/>
            <person name="Imamura K."/>
            <person name="Itoh M."/>
            <person name="Kato T."/>
            <person name="Kawaji H."/>
            <person name="Kawagashira N."/>
            <person name="Kawashima T."/>
            <person name="Kojima M."/>
            <person name="Kondo S."/>
            <person name="Konno H."/>
            <person name="Nakano K."/>
            <person name="Ninomiya N."/>
            <person name="Nishio T."/>
            <person name="Okada M."/>
            <person name="Plessy C."/>
            <person name="Shibata K."/>
            <person name="Shiraki T."/>
            <person name="Suzuki S."/>
            <person name="Tagami M."/>
            <person name="Waki K."/>
            <person name="Watahiki A."/>
            <person name="Okamura-Oho Y."/>
            <person name="Suzuki H."/>
            <person name="Kawai J."/>
            <person name="Hayashizaki Y."/>
        </authorList>
    </citation>
    <scope>NUCLEOTIDE SEQUENCE [LARGE SCALE MRNA]</scope>
    <source>
        <strain>C57BL/6J</strain>
        <strain>NOD</strain>
        <tissue>Dendritic cell</tissue>
        <tissue>Embryo</tissue>
    </source>
</reference>
<reference key="4">
    <citation type="journal article" date="2004" name="Genome Res.">
        <title>The status, quality, and expansion of the NIH full-length cDNA project: the Mammalian Gene Collection (MGC).</title>
        <authorList>
            <consortium name="The MGC Project Team"/>
        </authorList>
    </citation>
    <scope>NUCLEOTIDE SEQUENCE [LARGE SCALE MRNA]</scope>
    <source>
        <strain>FVB/N</strain>
        <tissue evidence="26">Mammary gland</tissue>
    </source>
</reference>
<reference key="5">
    <citation type="submission" date="2000-04" db="EMBL/GenBank/DDBJ databases">
        <title>Characterization of the promoter region of the immediate early gene Arc.</title>
        <authorList>
            <person name="Medrano S."/>
            <person name="Worley P.F."/>
            <person name="Chowdhury S."/>
            <person name="Lanahan A."/>
            <person name="Steward O."/>
            <person name="Scrable H."/>
        </authorList>
    </citation>
    <scope>NUCLEOTIDE SEQUENCE [GENOMIC DNA] OF 1-242</scope>
    <source>
        <strain evidence="25">C57BL/6 X CBA</strain>
    </source>
</reference>
<reference key="6">
    <citation type="journal article" date="2000" name="Mech. Dev.">
        <title>Activity-regulated, cytoskeleton-associated protein (Arc) is essential for visceral endoderm organization during early embryogenesis.</title>
        <authorList>
            <person name="Liu D."/>
            <person name="Bei D."/>
            <person name="Parmar H."/>
            <person name="Matus A."/>
        </authorList>
    </citation>
    <scope>DEVELOPMENTAL STAGE</scope>
</reference>
<reference key="7">
    <citation type="journal article" date="2003" name="Biol. Reprod.">
        <title>Developmental association of the synaptic activity-regulated protein arc with the mouse acrosomal organelle and the sperm tail.</title>
        <authorList>
            <person name="Maier B."/>
            <person name="Medrano S."/>
            <person name="Sleight S.B."/>
            <person name="Visconti P.E."/>
            <person name="Scrable H."/>
        </authorList>
    </citation>
    <scope>SUBCELLULAR LOCATION</scope>
    <scope>TISSUE SPECIFICITY</scope>
    <scope>DEVELOPMENTAL STAGE</scope>
</reference>
<reference key="8">
    <citation type="journal article" date="2006" name="Neuron">
        <title>Arc/Arg3.1 is essential for the consolidation of synaptic plasticity and memories.</title>
        <authorList>
            <person name="Plath N."/>
            <person name="Ohana O."/>
            <person name="Dammermann B."/>
            <person name="Errington M.L."/>
            <person name="Schmitz D."/>
            <person name="Gross C."/>
            <person name="Mao X."/>
            <person name="Engelsberg A."/>
            <person name="Mahlke C."/>
            <person name="Welzl H."/>
            <person name="Kobalz U."/>
            <person name="Stawrakakis A."/>
            <person name="Fernandez E."/>
            <person name="Waltereit R."/>
            <person name="Bick-Sander A."/>
            <person name="Therstappen E."/>
            <person name="Cooke S.F."/>
            <person name="Blanquet V."/>
            <person name="Wurst W."/>
            <person name="Salmen B."/>
            <person name="Bosl M.R."/>
            <person name="Lipp H.P."/>
            <person name="Grant S.G."/>
            <person name="Bliss T.V."/>
            <person name="Wolfer D.P."/>
            <person name="Kuhl D."/>
        </authorList>
    </citation>
    <scope>FUNCTION</scope>
    <scope>DISRUPTION PHENOTYPE</scope>
</reference>
<reference key="9">
    <citation type="journal article" date="2006" name="Neuron">
        <title>Arc/Arg3.1 mediates homeostatic synaptic scaling of AMPA Receptors.</title>
        <authorList>
            <person name="Shepherd J.D."/>
            <person name="Rumbaugh G."/>
            <person name="Wu J."/>
            <person name="Chowdhury S."/>
            <person name="Plath N."/>
            <person name="Kuhl D."/>
            <person name="Huganir R.L."/>
            <person name="Worley P.F."/>
        </authorList>
    </citation>
    <scope>FUNCTION</scope>
</reference>
<reference key="10">
    <citation type="journal article" date="2009" name="Proc. Natl. Acad. Sci. U.S.A.">
        <title>Synaptic activity-responsive element in the Arc/Arg3.1 promoter essential for synapse-to-nucleus signaling in activated neurons.</title>
        <authorList>
            <person name="Kawashima T."/>
            <person name="Okuno H."/>
            <person name="Nonaka M."/>
            <person name="Adachi-Morishima A."/>
            <person name="Kyo N."/>
            <person name="Okamura M."/>
            <person name="Takemoto-Kimura S."/>
            <person name="Worley P.F."/>
            <person name="Bito H."/>
        </authorList>
    </citation>
    <scope>INDUCTION</scope>
</reference>
<reference key="11">
    <citation type="journal article" date="2010" name="Cell">
        <title>The Angelman syndrome protein Ube3A regulates synapse development by ubiquitinating Arc.</title>
        <authorList>
            <person name="Greer P.L."/>
            <person name="Hanayama R."/>
            <person name="Bloodgood B.L."/>
            <person name="Mardinly A.R."/>
            <person name="Lipton D.M."/>
            <person name="Flavell S.W."/>
            <person name="Kim T.K."/>
            <person name="Griffith E.C."/>
            <person name="Waldon Z."/>
            <person name="Maehr R."/>
            <person name="Ploegh H.L."/>
            <person name="Chowdhury S."/>
            <person name="Worley P.F."/>
            <person name="Steen J."/>
            <person name="Greenberg M.E."/>
        </authorList>
    </citation>
    <scope>FUNCTION</scope>
    <scope>UBIQUITINATION</scope>
</reference>
<reference key="12">
    <citation type="journal article" date="2011" name="Cell">
        <title>Arc/Arg3.1 regulates an endosomal pathway essential for activity-dependent beta-amyloid generation.</title>
        <authorList>
            <person name="Wu J."/>
            <person name="Petralia R.S."/>
            <person name="Kurushima H."/>
            <person name="Patel H."/>
            <person name="Jung M.Y."/>
            <person name="Volk L."/>
            <person name="Chowdhury S."/>
            <person name="Shepherd J.D."/>
            <person name="Dehoff M."/>
            <person name="Li Y."/>
            <person name="Kuhl D."/>
            <person name="Huganir R.L."/>
            <person name="Price D.L."/>
            <person name="Scannevin R."/>
            <person name="Troncoso J.C."/>
            <person name="Wong P.C."/>
            <person name="Worley P.F."/>
        </authorList>
    </citation>
    <scope>FUNCTION</scope>
    <scope>INTERACTION WITH PSEN1</scope>
</reference>
<reference key="13">
    <citation type="journal article" date="2013" name="Neuron">
        <title>Experience-induced Arc/Arg3.1 primes CA1 pyramidal neurons for metabotropic glutamate receptor-dependent long-term synaptic depression.</title>
        <authorList>
            <person name="Jakkamsetti V."/>
            <person name="Tsai N.P."/>
            <person name="Gross C."/>
            <person name="Molinaro G."/>
            <person name="Collins K.A."/>
            <person name="Nicoletti F."/>
            <person name="Wang K.H."/>
            <person name="Osten P."/>
            <person name="Bassell G.J."/>
            <person name="Gibson J.R."/>
            <person name="Huber K.M."/>
        </authorList>
    </citation>
    <scope>FUNCTION</scope>
    <scope>INDUCTION</scope>
</reference>
<reference key="14">
    <citation type="journal article" date="2010" name="Nat. Neurosci.">
        <title>Loss of Arc renders the visual cortex impervious to the effects of sensory experience or deprivation.</title>
        <authorList>
            <person name="McCurry C.L."/>
            <person name="Shepherd J.D."/>
            <person name="Tropea D."/>
            <person name="Wang K.H."/>
            <person name="Bear M.F."/>
            <person name="Sur M."/>
        </authorList>
    </citation>
    <scope>FUNCTION</scope>
    <scope>DISRUPTION PHENOTYPE</scope>
    <scope>TISSUE SPECIFICITY</scope>
</reference>
<reference key="15">
    <citation type="journal article" date="2013" name="Neuron">
        <title>Arc/Arg3.1 is a postsynaptic mediator of activity-dependent synapse elimination in the developing cerebellum.</title>
        <authorList>
            <person name="Mikuni T."/>
            <person name="Uesaka N."/>
            <person name="Okuno H."/>
            <person name="Hirai H."/>
            <person name="Deisseroth K."/>
            <person name="Bito H."/>
            <person name="Kano M."/>
        </authorList>
    </citation>
    <scope>FUNCTION</scope>
</reference>
<reference key="16">
    <citation type="journal article" date="2016" name="Cell Rep.">
        <title>Genetic disruption of Arc/Arg3.1 in mice causes alterations in dopamine and neurobehavioral phenotypes related to schizophrenia.</title>
        <authorList>
            <person name="Manago F."/>
            <person name="Mereu M."/>
            <person name="Mastwal S."/>
            <person name="Mastrogiacomo R."/>
            <person name="Scheggia D."/>
            <person name="Emanuele M."/>
            <person name="De Luca M.A."/>
            <person name="Weinberger D.R."/>
            <person name="Wang K.H."/>
            <person name="Papaleo F."/>
        </authorList>
    </citation>
    <scope>DISRUPTION PHENOTYPE</scope>
</reference>
<reference key="17">
    <citation type="journal article" date="2016" name="Neurobiol. Learn. Mem.">
        <title>Effects of Arc/Arg3.1 gene deletion on rhythmic synchronization of hippocampal CA1 neurons during locomotor activity and sleep.</title>
        <authorList>
            <person name="Malkki H.A."/>
            <person name="Mertens P.E."/>
            <person name="Lankelma J.V."/>
            <person name="Vinck M."/>
            <person name="van Schalkwijk F.J."/>
            <person name="van Mourik-Donga L.B."/>
            <person name="Battaglia F.P."/>
            <person name="Mahlke C."/>
            <person name="Kuhl D."/>
            <person name="Pennartz C.M."/>
        </authorList>
    </citation>
    <scope>DISRUPTION PHENOTYPE</scope>
</reference>
<reference key="18">
    <citation type="journal article" date="2016" name="Sci. Immunol.">
        <title>Arc/Arg3.1 governs inflammatory dendritic cell migration from the skin and thereby controls T cell activation.</title>
        <authorList>
            <person name="Ufer F."/>
            <person name="Vargas P."/>
            <person name="Engler J.B."/>
            <person name="Tintelnot J."/>
            <person name="Schattling B."/>
            <person name="Winkler H."/>
            <person name="Bauer S."/>
            <person name="Kursawe N."/>
            <person name="Willing A."/>
            <person name="Keminer O."/>
            <person name="Ohana O."/>
            <person name="Salinas-Riester G."/>
            <person name="Pless O."/>
            <person name="Kuhl D."/>
            <person name="Friese M.A."/>
        </authorList>
    </citation>
    <scope>FUNCTION</scope>
    <scope>TISSUE SPECIFICITY</scope>
</reference>
<reference key="19">
    <citation type="journal article" date="2018" name="Biochemistry">
        <title>Palmitoylation and membrane binding of Arc/Arg3.1: a potential role in synaptic depression.</title>
        <authorList>
            <person name="Barylko B."/>
            <person name="Wilkerson J.R."/>
            <person name="Cavalier S.H."/>
            <person name="Binns D.D."/>
            <person name="James N.G."/>
            <person name="Jameson D.M."/>
            <person name="Huber K.M."/>
            <person name="Albanesi J.P."/>
        </authorList>
    </citation>
    <scope>FUNCTION</scope>
    <scope>PALMITOYLATION</scope>
    <scope>MUTAGENESIS OF 94-CYS--CYS-98</scope>
</reference>
<reference key="20">
    <citation type="journal article" date="2019" name="Mol. Cell">
        <title>Arc oligomerization is regulated by CaMKII phosphorylation of the GAG domain: an essential mechanism for plasticity and memory formation.</title>
        <authorList>
            <person name="Zhang W."/>
            <person name="Chuang Y.A."/>
            <person name="Na Y."/>
            <person name="Ye Z."/>
            <person name="Yang L."/>
            <person name="Lin R."/>
            <person name="Zhou J."/>
            <person name="Wu J."/>
            <person name="Qiu J."/>
            <person name="Savonenko A."/>
            <person name="Leahy D.J."/>
            <person name="Huganir R."/>
            <person name="Linden D.J."/>
            <person name="Worley P.F."/>
        </authorList>
    </citation>
    <scope>FUNCTION</scope>
    <scope>SUBCELLULAR LOCATION</scope>
    <scope>SUBUNIT</scope>
    <scope>PHOSPHORYLATION AT SER-260 AND THR-278</scope>
    <scope>MUTAGENESIS OF GLN-241; LYS-257; SER-260; GLY-277; THR-278 AND ARG-335</scope>
</reference>
<gene>
    <name evidence="28" type="primary">Arc</name>
</gene>
<organism>
    <name type="scientific">Mus musculus</name>
    <name type="common">Mouse</name>
    <dbReference type="NCBI Taxonomy" id="10090"/>
    <lineage>
        <taxon>Eukaryota</taxon>
        <taxon>Metazoa</taxon>
        <taxon>Chordata</taxon>
        <taxon>Craniata</taxon>
        <taxon>Vertebrata</taxon>
        <taxon>Euteleostomi</taxon>
        <taxon>Mammalia</taxon>
        <taxon>Eutheria</taxon>
        <taxon>Euarchontoglires</taxon>
        <taxon>Glires</taxon>
        <taxon>Rodentia</taxon>
        <taxon>Myomorpha</taxon>
        <taxon>Muroidea</taxon>
        <taxon>Muridae</taxon>
        <taxon>Murinae</taxon>
        <taxon>Mus</taxon>
        <taxon>Mus</taxon>
    </lineage>
</organism>
<name>ARC_MOUSE</name>
<proteinExistence type="evidence at protein level"/>